<keyword id="KW-0997">Cell inner membrane</keyword>
<keyword id="KW-1003">Cell membrane</keyword>
<keyword id="KW-0472">Membrane</keyword>
<keyword id="KW-1185">Reference proteome</keyword>
<keyword id="KW-0812">Transmembrane</keyword>
<keyword id="KW-1133">Transmembrane helix</keyword>
<gene>
    <name evidence="1" type="primary">yciB</name>
    <name type="ordered locus">Bphy_1025</name>
</gene>
<protein>
    <recommendedName>
        <fullName evidence="1">Inner membrane-spanning protein YciB</fullName>
    </recommendedName>
</protein>
<reference key="1">
    <citation type="journal article" date="2014" name="Stand. Genomic Sci.">
        <title>Complete genome sequence of Burkholderia phymatum STM815(T), a broad host range and efficient nitrogen-fixing symbiont of Mimosa species.</title>
        <authorList>
            <person name="Moulin L."/>
            <person name="Klonowska A."/>
            <person name="Caroline B."/>
            <person name="Booth K."/>
            <person name="Vriezen J.A."/>
            <person name="Melkonian R."/>
            <person name="James E.K."/>
            <person name="Young J.P."/>
            <person name="Bena G."/>
            <person name="Hauser L."/>
            <person name="Land M."/>
            <person name="Kyrpides N."/>
            <person name="Bruce D."/>
            <person name="Chain P."/>
            <person name="Copeland A."/>
            <person name="Pitluck S."/>
            <person name="Woyke T."/>
            <person name="Lizotte-Waniewski M."/>
            <person name="Bristow J."/>
            <person name="Riley M."/>
        </authorList>
    </citation>
    <scope>NUCLEOTIDE SEQUENCE [LARGE SCALE GENOMIC DNA]</scope>
    <source>
        <strain>DSM 17167 / CIP 108236 / LMG 21445 / STM815</strain>
    </source>
</reference>
<sequence length="176" mass="20052">MKFLFDLFPIILFFVAYKVWGIFTATAVAIGATLVQIAWVAFRHRKVDPMLWVSLGVVTVFGGATLVLHNDTFIKWKPTVLYWAFSVVLVVSALGFNKNLIEAMMGKQIQLPHRIWGQLNYVWAVFFVLLGILNLFVAYNFSTDAWVNFKLFGATGCLVVFIVGQSLWLSKYMKEE</sequence>
<accession>B2JGM9</accession>
<organism>
    <name type="scientific">Paraburkholderia phymatum (strain DSM 17167 / CIP 108236 / LMG 21445 / STM815)</name>
    <name type="common">Burkholderia phymatum</name>
    <dbReference type="NCBI Taxonomy" id="391038"/>
    <lineage>
        <taxon>Bacteria</taxon>
        <taxon>Pseudomonadati</taxon>
        <taxon>Pseudomonadota</taxon>
        <taxon>Betaproteobacteria</taxon>
        <taxon>Burkholderiales</taxon>
        <taxon>Burkholderiaceae</taxon>
        <taxon>Paraburkholderia</taxon>
    </lineage>
</organism>
<name>YCIB_PARP8</name>
<evidence type="ECO:0000255" key="1">
    <source>
        <dbReference type="HAMAP-Rule" id="MF_00189"/>
    </source>
</evidence>
<feature type="chain" id="PRO_1000098874" description="Inner membrane-spanning protein YciB">
    <location>
        <begin position="1"/>
        <end position="176"/>
    </location>
</feature>
<feature type="transmembrane region" description="Helical" evidence="1">
    <location>
        <begin position="24"/>
        <end position="44"/>
    </location>
</feature>
<feature type="transmembrane region" description="Helical" evidence="1">
    <location>
        <begin position="49"/>
        <end position="69"/>
    </location>
</feature>
<feature type="transmembrane region" description="Helical" evidence="1">
    <location>
        <begin position="76"/>
        <end position="96"/>
    </location>
</feature>
<feature type="transmembrane region" description="Helical" evidence="1">
    <location>
        <begin position="121"/>
        <end position="141"/>
    </location>
</feature>
<feature type="transmembrane region" description="Helical" evidence="1">
    <location>
        <begin position="149"/>
        <end position="169"/>
    </location>
</feature>
<proteinExistence type="inferred from homology"/>
<comment type="function">
    <text evidence="1">Plays a role in cell envelope biogenesis, maintenance of cell envelope integrity and membrane homeostasis.</text>
</comment>
<comment type="subcellular location">
    <subcellularLocation>
        <location evidence="1">Cell inner membrane</location>
        <topology evidence="1">Multi-pass membrane protein</topology>
    </subcellularLocation>
</comment>
<comment type="similarity">
    <text evidence="1">Belongs to the YciB family.</text>
</comment>
<dbReference type="EMBL" id="CP001043">
    <property type="protein sequence ID" value="ACC70214.1"/>
    <property type="molecule type" value="Genomic_DNA"/>
</dbReference>
<dbReference type="RefSeq" id="WP_012400428.1">
    <property type="nucleotide sequence ID" value="NC_010622.1"/>
</dbReference>
<dbReference type="SMR" id="B2JGM9"/>
<dbReference type="STRING" id="391038.Bphy_1025"/>
<dbReference type="KEGG" id="bph:Bphy_1025"/>
<dbReference type="eggNOG" id="COG2917">
    <property type="taxonomic scope" value="Bacteria"/>
</dbReference>
<dbReference type="HOGENOM" id="CLU_089554_2_0_4"/>
<dbReference type="OrthoDB" id="9788219at2"/>
<dbReference type="Proteomes" id="UP000001192">
    <property type="component" value="Chromosome 1"/>
</dbReference>
<dbReference type="GO" id="GO:0005886">
    <property type="term" value="C:plasma membrane"/>
    <property type="evidence" value="ECO:0007669"/>
    <property type="project" value="UniProtKB-SubCell"/>
</dbReference>
<dbReference type="HAMAP" id="MF_00189">
    <property type="entry name" value="YciB"/>
    <property type="match status" value="1"/>
</dbReference>
<dbReference type="InterPro" id="IPR006008">
    <property type="entry name" value="YciB"/>
</dbReference>
<dbReference type="NCBIfam" id="TIGR00997">
    <property type="entry name" value="ispZ"/>
    <property type="match status" value="1"/>
</dbReference>
<dbReference type="NCBIfam" id="NF001325">
    <property type="entry name" value="PRK00259.1-3"/>
    <property type="match status" value="1"/>
</dbReference>
<dbReference type="PANTHER" id="PTHR36917:SF1">
    <property type="entry name" value="INNER MEMBRANE-SPANNING PROTEIN YCIB"/>
    <property type="match status" value="1"/>
</dbReference>
<dbReference type="PANTHER" id="PTHR36917">
    <property type="entry name" value="INTRACELLULAR SEPTATION PROTEIN A-RELATED"/>
    <property type="match status" value="1"/>
</dbReference>
<dbReference type="Pfam" id="PF04279">
    <property type="entry name" value="IspA"/>
    <property type="match status" value="1"/>
</dbReference>